<name>OPGB_ECOL6</name>
<sequence>MSELLSFALFLASVLIYAWKAGRNTWWFAATLTVLGLFVVLNITLFASDYFTGDGINDAVLYTLTNSLTGAGVSKYILPGIGIVLGLAAVFGALGWILRRRRHHPHHFGYSLLALLLALGSVDASPAFRQITELVKSQSRDGDPDFAAYYKEPSKTIPDPKLNLVYIYGESLERTYFDNEAFPDLTPELGALKNEGLDFSHTQQLPGTDYTIAGMVASQCGIPLFAPFEGNASASVSSFFPQNICLGDILKNSGYQNYFVQGANLRFAGKDVFLKSHGFDHLYGSEELKSVVADPHYRNDWGFYDDTVLDEAWKKFEELSRSGQRFSLFTLTVDTHHPDGFISRTCNRKKYDFDGKPNQSFSAVSCSQENIATFINKIKASPWFKDTVIVVSSDHLAMNNTAWKYLNKQDRNNLFFVIRGDKPQQETLAVKRNTMDNGATVLDILGGDNYLGLGRSSLSGQSMSEIFLNIKEKTLAWKPDIIRLWKFPKEMKEFTIDQQKNMIAFSGSHFRLPLLLRVSDKRVEPLPESEYSAPLRFQLADFAPRDNFVWVDRCYKMAQLWAPELALSTDWCVSQGQLGGQQIVQHVDKAIWKGKTAFKDTVIDMARYKGNVDTLKIVDNDIRYKADSFIFNVAGAPEEVKQFSGISRPESWGRWSNAQLGDEVKIEYKHPLPKKFDLVITAKAYGNNASRPIPVRVGNEEQTLVLGNEVTTTTLHFDNPTDADTLVIVPPEPVSTNEGNILGHSPRKLGIGMVEIKVVEREG</sequence>
<evidence type="ECO:0000255" key="1">
    <source>
        <dbReference type="HAMAP-Rule" id="MF_01070"/>
    </source>
</evidence>
<accession>Q8FA73</accession>
<organism>
    <name type="scientific">Escherichia coli O6:H1 (strain CFT073 / ATCC 700928 / UPEC)</name>
    <dbReference type="NCBI Taxonomy" id="199310"/>
    <lineage>
        <taxon>Bacteria</taxon>
        <taxon>Pseudomonadati</taxon>
        <taxon>Pseudomonadota</taxon>
        <taxon>Gammaproteobacteria</taxon>
        <taxon>Enterobacterales</taxon>
        <taxon>Enterobacteriaceae</taxon>
        <taxon>Escherichia</taxon>
    </lineage>
</organism>
<reference key="1">
    <citation type="journal article" date="2002" name="Proc. Natl. Acad. Sci. U.S.A.">
        <title>Extensive mosaic structure revealed by the complete genome sequence of uropathogenic Escherichia coli.</title>
        <authorList>
            <person name="Welch R.A."/>
            <person name="Burland V."/>
            <person name="Plunkett G. III"/>
            <person name="Redford P."/>
            <person name="Roesch P."/>
            <person name="Rasko D."/>
            <person name="Buckles E.L."/>
            <person name="Liou S.-R."/>
            <person name="Boutin A."/>
            <person name="Hackett J."/>
            <person name="Stroud D."/>
            <person name="Mayhew G.F."/>
            <person name="Rose D.J."/>
            <person name="Zhou S."/>
            <person name="Schwartz D.C."/>
            <person name="Perna N.T."/>
            <person name="Mobley H.L.T."/>
            <person name="Donnenberg M.S."/>
            <person name="Blattner F.R."/>
        </authorList>
    </citation>
    <scope>NUCLEOTIDE SEQUENCE [LARGE SCALE GENOMIC DNA]</scope>
    <source>
        <strain>CFT073 / ATCC 700928 / UPEC</strain>
    </source>
</reference>
<gene>
    <name evidence="1" type="primary">mdoB</name>
    <name evidence="1" type="synonym">opgB</name>
    <name type="ordered locus">c5438</name>
</gene>
<comment type="function">
    <text evidence="1">Transfers a phosphoglycerol residue from phosphatidylglycerol to the membrane-bound nascent glucan backbones.</text>
</comment>
<comment type="catalytic activity">
    <reaction evidence="1">
        <text>a phosphatidylglycerol + a membrane-derived-oligosaccharide D-glucose = a 1,2-diacyl-sn-glycerol + a membrane-derived-oligosaccharide 6-(glycerophospho)-D-glucose.</text>
        <dbReference type="EC" id="2.7.8.20"/>
    </reaction>
</comment>
<comment type="pathway">
    <text evidence="1">Glycan metabolism; osmoregulated periplasmic glucan (OPG) biosynthesis.</text>
</comment>
<comment type="subcellular location">
    <subcellularLocation>
        <location evidence="1">Cell inner membrane</location>
        <topology evidence="1">Multi-pass membrane protein</topology>
    </subcellularLocation>
</comment>
<comment type="similarity">
    <text evidence="1">Belongs to the OpgB family.</text>
</comment>
<keyword id="KW-0997">Cell inner membrane</keyword>
<keyword id="KW-1003">Cell membrane</keyword>
<keyword id="KW-0472">Membrane</keyword>
<keyword id="KW-1185">Reference proteome</keyword>
<keyword id="KW-0808">Transferase</keyword>
<keyword id="KW-0812">Transmembrane</keyword>
<keyword id="KW-1133">Transmembrane helix</keyword>
<feature type="chain" id="PRO_0000213060" description="Phosphoglycerol transferase I">
    <location>
        <begin position="1"/>
        <end position="763"/>
    </location>
</feature>
<feature type="transmembrane region" description="Helical" evidence="1">
    <location>
        <begin position="4"/>
        <end position="19"/>
    </location>
</feature>
<feature type="transmembrane region" description="Helical" evidence="1">
    <location>
        <begin position="26"/>
        <end position="48"/>
    </location>
</feature>
<feature type="transmembrane region" description="Helical" evidence="1">
    <location>
        <begin position="76"/>
        <end position="98"/>
    </location>
</feature>
<feature type="transmembrane region" description="Helical" evidence="1">
    <location>
        <begin position="105"/>
        <end position="127"/>
    </location>
</feature>
<dbReference type="EC" id="2.7.8.20" evidence="1"/>
<dbReference type="EMBL" id="AE014075">
    <property type="protein sequence ID" value="AAN83858.1"/>
    <property type="molecule type" value="Genomic_DNA"/>
</dbReference>
<dbReference type="RefSeq" id="WP_001292628.1">
    <property type="nucleotide sequence ID" value="NZ_CP051263.1"/>
</dbReference>
<dbReference type="SMR" id="Q8FA73"/>
<dbReference type="STRING" id="199310.c5438"/>
<dbReference type="KEGG" id="ecc:c5438"/>
<dbReference type="eggNOG" id="COG1368">
    <property type="taxonomic scope" value="Bacteria"/>
</dbReference>
<dbReference type="HOGENOM" id="CLU_023986_1_0_6"/>
<dbReference type="BioCyc" id="ECOL199310:C5438-MONOMER"/>
<dbReference type="UniPathway" id="UPA00637"/>
<dbReference type="Proteomes" id="UP000001410">
    <property type="component" value="Chromosome"/>
</dbReference>
<dbReference type="GO" id="GO:0005886">
    <property type="term" value="C:plasma membrane"/>
    <property type="evidence" value="ECO:0007669"/>
    <property type="project" value="UniProtKB-SubCell"/>
</dbReference>
<dbReference type="GO" id="GO:0008960">
    <property type="term" value="F:phosphatidylglycerol-membrane-oligosaccharide glycerophosphotransferase activity"/>
    <property type="evidence" value="ECO:0007669"/>
    <property type="project" value="UniProtKB-UniRule"/>
</dbReference>
<dbReference type="GO" id="GO:0009250">
    <property type="term" value="P:glucan biosynthetic process"/>
    <property type="evidence" value="ECO:0007669"/>
    <property type="project" value="UniProtKB-UniRule"/>
</dbReference>
<dbReference type="CDD" id="cd16015">
    <property type="entry name" value="LTA_synthase"/>
    <property type="match status" value="1"/>
</dbReference>
<dbReference type="FunFam" id="3.40.720.10:FF:000009">
    <property type="entry name" value="Phosphoglycerol transferase I"/>
    <property type="match status" value="1"/>
</dbReference>
<dbReference type="Gene3D" id="3.40.720.10">
    <property type="entry name" value="Alkaline Phosphatase, subunit A"/>
    <property type="match status" value="1"/>
</dbReference>
<dbReference type="HAMAP" id="MF_01070">
    <property type="entry name" value="MdoB_OpgB"/>
    <property type="match status" value="1"/>
</dbReference>
<dbReference type="InterPro" id="IPR017850">
    <property type="entry name" value="Alkaline_phosphatase_core_sf"/>
</dbReference>
<dbReference type="InterPro" id="IPR054288">
    <property type="entry name" value="DUF7024"/>
</dbReference>
<dbReference type="InterPro" id="IPR020881">
    <property type="entry name" value="OpgB"/>
</dbReference>
<dbReference type="InterPro" id="IPR050448">
    <property type="entry name" value="OpgB/LTA_synthase_biosynth"/>
</dbReference>
<dbReference type="InterPro" id="IPR000917">
    <property type="entry name" value="Sulfatase_N"/>
</dbReference>
<dbReference type="NCBIfam" id="NF003000">
    <property type="entry name" value="PRK03776.1"/>
    <property type="match status" value="1"/>
</dbReference>
<dbReference type="PANTHER" id="PTHR47371">
    <property type="entry name" value="LIPOTEICHOIC ACID SYNTHASE"/>
    <property type="match status" value="1"/>
</dbReference>
<dbReference type="PANTHER" id="PTHR47371:SF3">
    <property type="entry name" value="PHOSPHOGLYCEROL TRANSFERASE I"/>
    <property type="match status" value="1"/>
</dbReference>
<dbReference type="Pfam" id="PF22895">
    <property type="entry name" value="DUF7024"/>
    <property type="match status" value="1"/>
</dbReference>
<dbReference type="Pfam" id="PF00884">
    <property type="entry name" value="Sulfatase"/>
    <property type="match status" value="1"/>
</dbReference>
<dbReference type="SUPFAM" id="SSF53649">
    <property type="entry name" value="Alkaline phosphatase-like"/>
    <property type="match status" value="1"/>
</dbReference>
<protein>
    <recommendedName>
        <fullName evidence="1">Phosphoglycerol transferase I</fullName>
        <ecNumber evidence="1">2.7.8.20</ecNumber>
    </recommendedName>
    <alternativeName>
        <fullName evidence="1">Phosphatidylglycerol--membrane-oligosaccharide glycerophosphotransferase</fullName>
    </alternativeName>
</protein>
<proteinExistence type="inferred from homology"/>